<sequence>MSTDNKQSLPAITLAAIGVVYGDIGTSPLYTLRECLSGQFGFGVERDAVFGFLSLIFWLLIFVVSIKYLTFVMRADNAGEGGILTLMSLAGRNTSARTTSMLVIMGLIGGSFFYGEVVITPAISVMSAIEGLEIVAPQLDTWIVPLSIIVLTLLFMIQKHGTGMVGKLFAPIMLTWFLILAVLGLRSIIANPEVLHALNPVWAVRFFLEYKTVSFIALGAVVLSITGVEALYADMGHFGKFPIRLAWFTVVLPSLVLNYFGQGALLLKHPEAIKNPFFLLAPDWALIPLLILAALATVIASQAVISGVFSLTRQAVRLGYLSPMRIIHTSEMESGQIYIPFVNWLLYFAVVVVIVSFEHSSNLAAAYGIAVTGTMVLTSILSTTVARKNWHWNKYFVALILIAFLCVDIPLFSANLDKLLSGGWLPLSLGLIMFTIMTTWKSERFRLLRRMHEHGNSLEAMIASLEKSPPVRVPGTAVYMSRALSVIPFALLHNLKHNKVLHERVILLTLRTEDAPYVHNVRRVQIEQLSPTFWRVVASYGWRETPNVEEVFHRCGLEGLSCRMMETSFFMSHESLIVGKRPWYLRLRGKLYLLLQRNALRAPDQFEIPPNRVIELGTQVEI</sequence>
<accession>B5EZ13</accession>
<protein>
    <recommendedName>
        <fullName evidence="1">Low affinity potassium transport system protein Kup</fullName>
    </recommendedName>
    <alternativeName>
        <fullName evidence="1">Kup system potassium uptake protein</fullName>
    </alternativeName>
</protein>
<feature type="chain" id="PRO_1000190276" description="Low affinity potassium transport system protein Kup">
    <location>
        <begin position="1"/>
        <end position="622"/>
    </location>
</feature>
<feature type="transmembrane region" description="Helical" evidence="1">
    <location>
        <begin position="9"/>
        <end position="29"/>
    </location>
</feature>
<feature type="transmembrane region" description="Helical" evidence="1">
    <location>
        <begin position="49"/>
        <end position="69"/>
    </location>
</feature>
<feature type="transmembrane region" description="Helical" evidence="1">
    <location>
        <begin position="103"/>
        <end position="123"/>
    </location>
</feature>
<feature type="transmembrane region" description="Helical" evidence="1">
    <location>
        <begin position="137"/>
        <end position="157"/>
    </location>
</feature>
<feature type="transmembrane region" description="Helical" evidence="1">
    <location>
        <begin position="165"/>
        <end position="185"/>
    </location>
</feature>
<feature type="transmembrane region" description="Helical" evidence="1">
    <location>
        <begin position="213"/>
        <end position="233"/>
    </location>
</feature>
<feature type="transmembrane region" description="Helical" evidence="1">
    <location>
        <begin position="247"/>
        <end position="267"/>
    </location>
</feature>
<feature type="transmembrane region" description="Helical" evidence="1">
    <location>
        <begin position="276"/>
        <end position="296"/>
    </location>
</feature>
<feature type="transmembrane region" description="Helical" evidence="1">
    <location>
        <begin position="337"/>
        <end position="357"/>
    </location>
</feature>
<feature type="transmembrane region" description="Helical" evidence="1">
    <location>
        <begin position="363"/>
        <end position="383"/>
    </location>
</feature>
<feature type="transmembrane region" description="Helical" evidence="1">
    <location>
        <begin position="396"/>
        <end position="416"/>
    </location>
</feature>
<feature type="transmembrane region" description="Helical" evidence="1">
    <location>
        <begin position="419"/>
        <end position="439"/>
    </location>
</feature>
<keyword id="KW-0997">Cell inner membrane</keyword>
<keyword id="KW-1003">Cell membrane</keyword>
<keyword id="KW-0406">Ion transport</keyword>
<keyword id="KW-0472">Membrane</keyword>
<keyword id="KW-0630">Potassium</keyword>
<keyword id="KW-0633">Potassium transport</keyword>
<keyword id="KW-0769">Symport</keyword>
<keyword id="KW-0812">Transmembrane</keyword>
<keyword id="KW-1133">Transmembrane helix</keyword>
<keyword id="KW-0813">Transport</keyword>
<comment type="function">
    <text evidence="1">Responsible for the low-affinity transport of potassium into the cell. Likely operates as a K(+):H(+) symporter.</text>
</comment>
<comment type="catalytic activity">
    <reaction evidence="1">
        <text>K(+)(in) + H(+)(in) = K(+)(out) + H(+)(out)</text>
        <dbReference type="Rhea" id="RHEA:28490"/>
        <dbReference type="ChEBI" id="CHEBI:15378"/>
        <dbReference type="ChEBI" id="CHEBI:29103"/>
    </reaction>
    <physiologicalReaction direction="right-to-left" evidence="1">
        <dbReference type="Rhea" id="RHEA:28492"/>
    </physiologicalReaction>
</comment>
<comment type="subcellular location">
    <subcellularLocation>
        <location evidence="1">Cell inner membrane</location>
        <topology evidence="1">Multi-pass membrane protein</topology>
    </subcellularLocation>
</comment>
<comment type="similarity">
    <text evidence="1">Belongs to the HAK/KUP transporter (TC 2.A.72) family.</text>
</comment>
<proteinExistence type="inferred from homology"/>
<evidence type="ECO:0000255" key="1">
    <source>
        <dbReference type="HAMAP-Rule" id="MF_01522"/>
    </source>
</evidence>
<gene>
    <name evidence="1" type="primary">kup</name>
    <name type="ordered locus">SeAg_B4107</name>
</gene>
<dbReference type="EMBL" id="CP001138">
    <property type="protein sequence ID" value="ACH48456.1"/>
    <property type="molecule type" value="Genomic_DNA"/>
</dbReference>
<dbReference type="RefSeq" id="WP_000102338.1">
    <property type="nucleotide sequence ID" value="NC_011149.1"/>
</dbReference>
<dbReference type="KEGG" id="sea:SeAg_B4107"/>
<dbReference type="HOGENOM" id="CLU_008142_4_2_6"/>
<dbReference type="Proteomes" id="UP000008819">
    <property type="component" value="Chromosome"/>
</dbReference>
<dbReference type="GO" id="GO:0005886">
    <property type="term" value="C:plasma membrane"/>
    <property type="evidence" value="ECO:0007669"/>
    <property type="project" value="UniProtKB-SubCell"/>
</dbReference>
<dbReference type="GO" id="GO:0015079">
    <property type="term" value="F:potassium ion transmembrane transporter activity"/>
    <property type="evidence" value="ECO:0007669"/>
    <property type="project" value="UniProtKB-UniRule"/>
</dbReference>
<dbReference type="GO" id="GO:0015293">
    <property type="term" value="F:symporter activity"/>
    <property type="evidence" value="ECO:0007669"/>
    <property type="project" value="UniProtKB-UniRule"/>
</dbReference>
<dbReference type="HAMAP" id="MF_01522">
    <property type="entry name" value="Kup"/>
    <property type="match status" value="1"/>
</dbReference>
<dbReference type="InterPro" id="IPR003855">
    <property type="entry name" value="K+_transporter"/>
</dbReference>
<dbReference type="InterPro" id="IPR053952">
    <property type="entry name" value="K_trans_C"/>
</dbReference>
<dbReference type="InterPro" id="IPR053951">
    <property type="entry name" value="K_trans_N"/>
</dbReference>
<dbReference type="InterPro" id="IPR023051">
    <property type="entry name" value="Kup"/>
</dbReference>
<dbReference type="NCBIfam" id="TIGR00794">
    <property type="entry name" value="kup"/>
    <property type="match status" value="1"/>
</dbReference>
<dbReference type="NCBIfam" id="NF008015">
    <property type="entry name" value="PRK10745.1"/>
    <property type="match status" value="1"/>
</dbReference>
<dbReference type="PANTHER" id="PTHR30540:SF79">
    <property type="entry name" value="LOW AFFINITY POTASSIUM TRANSPORT SYSTEM PROTEIN KUP"/>
    <property type="match status" value="1"/>
</dbReference>
<dbReference type="PANTHER" id="PTHR30540">
    <property type="entry name" value="OSMOTIC STRESS POTASSIUM TRANSPORTER"/>
    <property type="match status" value="1"/>
</dbReference>
<dbReference type="Pfam" id="PF02705">
    <property type="entry name" value="K_trans"/>
    <property type="match status" value="1"/>
</dbReference>
<dbReference type="Pfam" id="PF22776">
    <property type="entry name" value="K_trans_C"/>
    <property type="match status" value="1"/>
</dbReference>
<reference key="1">
    <citation type="journal article" date="2011" name="J. Bacteriol.">
        <title>Comparative genomics of 28 Salmonella enterica isolates: evidence for CRISPR-mediated adaptive sublineage evolution.</title>
        <authorList>
            <person name="Fricke W.F."/>
            <person name="Mammel M.K."/>
            <person name="McDermott P.F."/>
            <person name="Tartera C."/>
            <person name="White D.G."/>
            <person name="Leclerc J.E."/>
            <person name="Ravel J."/>
            <person name="Cebula T.A."/>
        </authorList>
    </citation>
    <scope>NUCLEOTIDE SEQUENCE [LARGE SCALE GENOMIC DNA]</scope>
    <source>
        <strain>SL483</strain>
    </source>
</reference>
<organism>
    <name type="scientific">Salmonella agona (strain SL483)</name>
    <dbReference type="NCBI Taxonomy" id="454166"/>
    <lineage>
        <taxon>Bacteria</taxon>
        <taxon>Pseudomonadati</taxon>
        <taxon>Pseudomonadota</taxon>
        <taxon>Gammaproteobacteria</taxon>
        <taxon>Enterobacterales</taxon>
        <taxon>Enterobacteriaceae</taxon>
        <taxon>Salmonella</taxon>
    </lineage>
</organism>
<name>KUP_SALA4</name>